<sequence>MSKNRDRVALPPVNAQKTNMTCHFCIVGCGYHVYKWDENKEGGRAANQNALGLDFTKQLPPFATTLTPAMTNVITAKNGKRSNIMIIPDKECVVNQGLSSTRGGKMAGYMYAADGMTADRLKYPRFYAGDQWLDTSWDHAMAIYAGLTKKILDQGNVRDIMFATFDHGGAGGGFENTWGSGKLMFSAIQTPTVRIHNRPAYNSECHATREMGIGELNNSYEDAQVADVIWSIGNNPYETQTNYFLNHWLPNLNGSTEEKKKQWFAGEPVGPGLMIFVDPRRTTSIAIAEQTAKDRVLHLDINPGTDVALFNGLLTYVVQQGWIAKEFIAQHTVGFEDAVKTNQMSLADCSRITGVSEDKLRQAAEWSYKPKAAGKMPRTMHAYEKGIIWGNDNYNIQSSLLDLVIATQNVGRRGTGCVRMGGHQEGYVRPPHPTGEKIYVDQEIIQGKGRMMTWWGCNNFQTSNNAQALREVSLRRSQIVKDAMSKARGASAAEMVDIIYDATSKGGLFVTSINLYPTKLSEAAHLMLPAAHPGEMNLTSMNGERRMRLSEKFMDAPGDALPDCLIAAKAANTLKAMYEAEGKPEMVKRFSGFDWKTEEDAFNDGFRSAGQPGAEPIDSQGGSTGVLATYTLLRAAGTNGVQLPIKRVENGKMIGTAIHYDDNKFDTKDGKAHFKPAPWNGLPKPVEEQKAKHKFWLNNGRANEVWQSAYHDQYNDFVKSRYPLAYIELNPGDAQSLGVAAGDVVEVFNDYGSTFAMAYPVKDMKPSHTFMLFGYVNGIQGDVTTDWVDRNIIPYYKGTWGSVRRIGSIEQYKKTVSTKRRAFDNV</sequence>
<keyword id="KW-0003">3Fe-4S</keyword>
<keyword id="KW-0408">Iron</keyword>
<keyword id="KW-0411">Iron-sulfur</keyword>
<keyword id="KW-0479">Metal-binding</keyword>
<keyword id="KW-0500">Molybdenum</keyword>
<keyword id="KW-0560">Oxidoreductase</keyword>
<keyword id="KW-1185">Reference proteome</keyword>
<dbReference type="EC" id="1.20.9.1"/>
<dbReference type="EMBL" id="AF509588">
    <property type="protein sequence ID" value="AAN05581.1"/>
    <property type="molecule type" value="Genomic_DNA"/>
</dbReference>
<dbReference type="EMBL" id="CU207211">
    <property type="protein sequence ID" value="CAL60690.1"/>
    <property type="molecule type" value="Genomic_DNA"/>
</dbReference>
<dbReference type="SMR" id="Q8GGJ6"/>
<dbReference type="STRING" id="204773.HEAR0478"/>
<dbReference type="KEGG" id="har:HEAR0478"/>
<dbReference type="eggNOG" id="COG0243">
    <property type="taxonomic scope" value="Bacteria"/>
</dbReference>
<dbReference type="HOGENOM" id="CLU_328691_0_0_4"/>
<dbReference type="OrthoDB" id="9810782at2"/>
<dbReference type="Proteomes" id="UP000006697">
    <property type="component" value="Chromosome"/>
</dbReference>
<dbReference type="GO" id="GO:0016020">
    <property type="term" value="C:membrane"/>
    <property type="evidence" value="ECO:0007669"/>
    <property type="project" value="TreeGrafter"/>
</dbReference>
<dbReference type="GO" id="GO:1990204">
    <property type="term" value="C:oxidoreductase complex"/>
    <property type="evidence" value="ECO:0007669"/>
    <property type="project" value="UniProtKB-ARBA"/>
</dbReference>
<dbReference type="GO" id="GO:0051538">
    <property type="term" value="F:3 iron, 4 sulfur cluster binding"/>
    <property type="evidence" value="ECO:0007669"/>
    <property type="project" value="UniProtKB-KW"/>
</dbReference>
<dbReference type="GO" id="GO:0050611">
    <property type="term" value="F:arsenate reductase (azurin) activity"/>
    <property type="evidence" value="ECO:0007669"/>
    <property type="project" value="UniProtKB-EC"/>
</dbReference>
<dbReference type="GO" id="GO:0046872">
    <property type="term" value="F:metal ion binding"/>
    <property type="evidence" value="ECO:0007669"/>
    <property type="project" value="UniProtKB-KW"/>
</dbReference>
<dbReference type="GO" id="GO:0043546">
    <property type="term" value="F:molybdopterin cofactor binding"/>
    <property type="evidence" value="ECO:0007669"/>
    <property type="project" value="InterPro"/>
</dbReference>
<dbReference type="GO" id="GO:0003954">
    <property type="term" value="F:NADH dehydrogenase activity"/>
    <property type="evidence" value="ECO:0007669"/>
    <property type="project" value="TreeGrafter"/>
</dbReference>
<dbReference type="GO" id="GO:0022904">
    <property type="term" value="P:respiratory electron transport chain"/>
    <property type="evidence" value="ECO:0007669"/>
    <property type="project" value="TreeGrafter"/>
</dbReference>
<dbReference type="CDD" id="cd02756">
    <property type="entry name" value="MopB_Arsenite-Ox"/>
    <property type="match status" value="1"/>
</dbReference>
<dbReference type="Gene3D" id="2.40.40.20">
    <property type="match status" value="1"/>
</dbReference>
<dbReference type="Gene3D" id="3.30.200.200">
    <property type="match status" value="1"/>
</dbReference>
<dbReference type="Gene3D" id="3.40.50.740">
    <property type="match status" value="1"/>
</dbReference>
<dbReference type="Gene3D" id="3.40.228.10">
    <property type="entry name" value="Dimethylsulfoxide Reductase, domain 2"/>
    <property type="match status" value="1"/>
</dbReference>
<dbReference type="InterPro" id="IPR041632">
    <property type="entry name" value="AioA/IdrA_3Fe-4S"/>
</dbReference>
<dbReference type="InterPro" id="IPR014066">
    <property type="entry name" value="AioA/IdrA_lsu"/>
</dbReference>
<dbReference type="InterPro" id="IPR009010">
    <property type="entry name" value="Asp_de-COase-like_dom_sf"/>
</dbReference>
<dbReference type="InterPro" id="IPR006657">
    <property type="entry name" value="MoPterin_dinucl-bd_dom"/>
</dbReference>
<dbReference type="InterPro" id="IPR006656">
    <property type="entry name" value="Mopterin_OxRdtase"/>
</dbReference>
<dbReference type="InterPro" id="IPR050123">
    <property type="entry name" value="Prok_molybdopt-oxidoreductase"/>
</dbReference>
<dbReference type="NCBIfam" id="TIGR02693">
    <property type="entry name" value="arsenite_ox_L"/>
    <property type="match status" value="1"/>
</dbReference>
<dbReference type="PANTHER" id="PTHR43105:SF10">
    <property type="entry name" value="NADH-QUINONE OXIDOREDUCTASE SUBUNIT G"/>
    <property type="match status" value="1"/>
</dbReference>
<dbReference type="PANTHER" id="PTHR43105">
    <property type="entry name" value="RESPIRATORY NITRATE REDUCTASE"/>
    <property type="match status" value="1"/>
</dbReference>
<dbReference type="Pfam" id="PF00384">
    <property type="entry name" value="Molybdopterin"/>
    <property type="match status" value="1"/>
</dbReference>
<dbReference type="Pfam" id="PF01568">
    <property type="entry name" value="Molydop_binding"/>
    <property type="match status" value="1"/>
</dbReference>
<dbReference type="Pfam" id="PF18465">
    <property type="entry name" value="Rieske_3"/>
    <property type="match status" value="1"/>
</dbReference>
<dbReference type="SUPFAM" id="SSF50692">
    <property type="entry name" value="ADC-like"/>
    <property type="match status" value="1"/>
</dbReference>
<dbReference type="SUPFAM" id="SSF53706">
    <property type="entry name" value="Formate dehydrogenase/DMSO reductase, domains 1-3"/>
    <property type="match status" value="1"/>
</dbReference>
<evidence type="ECO:0000250" key="1"/>
<evidence type="ECO:0000250" key="2">
    <source>
        <dbReference type="UniProtKB" id="Q7SIF4"/>
    </source>
</evidence>
<evidence type="ECO:0000269" key="3">
    <source>
    </source>
</evidence>
<evidence type="ECO:0000305" key="4"/>
<protein>
    <recommendedName>
        <fullName>Arsenite oxidase subunit AioA</fullName>
        <ecNumber>1.20.9.1</ecNumber>
    </recommendedName>
    <alternativeName>
        <fullName>Arsenite oxidase Mo-pterin subunit</fullName>
    </alternativeName>
</protein>
<comment type="function">
    <text>Involved in the detoxification of arsenic. Oxidizes As(III)O3(3-) (arsenite) to the somewhat less toxic As(V)O4(3-) (arsenate).</text>
</comment>
<comment type="catalytic activity">
    <reaction>
        <text>2 oxidized [azurin] + arsenite + H2O = 2 reduced [azurin] + arsenate + 3 H(+)</text>
        <dbReference type="Rhea" id="RHEA:18701"/>
        <dbReference type="Rhea" id="RHEA-COMP:11034"/>
        <dbReference type="Rhea" id="RHEA-COMP:11035"/>
        <dbReference type="ChEBI" id="CHEBI:15377"/>
        <dbReference type="ChEBI" id="CHEBI:15378"/>
        <dbReference type="ChEBI" id="CHEBI:29036"/>
        <dbReference type="ChEBI" id="CHEBI:29242"/>
        <dbReference type="ChEBI" id="CHEBI:48597"/>
        <dbReference type="ChEBI" id="CHEBI:49552"/>
        <dbReference type="EC" id="1.20.9.1"/>
    </reaction>
</comment>
<comment type="cofactor">
    <cofactor evidence="2">
        <name>[3Fe-4S] cluster</name>
        <dbReference type="ChEBI" id="CHEBI:21137"/>
    </cofactor>
    <text evidence="2">Binds 1 [3Fe-4S] cluster per subunit.</text>
</comment>
<comment type="cofactor">
    <cofactor evidence="2">
        <name>Mo-bis(molybdopterin guanine dinucleotide)</name>
        <dbReference type="ChEBI" id="CHEBI:60539"/>
    </cofactor>
    <text evidence="2">Binds 1 molybdenum-bis(molybdopterin guanine dinucleotide) (Mo-bis-MGD) cofactor per subunit.</text>
</comment>
<comment type="subunit">
    <text evidence="2">Heterodimer consisting of a large and a small subunit.</text>
</comment>
<comment type="induction">
    <text evidence="3">Induced in the presence of arsenite.</text>
</comment>
<comment type="similarity">
    <text evidence="4">Belongs to the prokaryotic molybdopterin-containing oxidoreductase family.</text>
</comment>
<gene>
    <name type="primary">aioA</name>
    <name type="synonym">aoxB</name>
    <name type="ordered locus">HEAR0478</name>
</gene>
<reference key="1">
    <citation type="journal article" date="2003" name="J. Bacteriol.">
        <title>Arsenite oxidase aox genes from a metal-resistant beta-Proteobacterium.</title>
        <authorList>
            <person name="Muller D."/>
            <person name="Lievremont D."/>
            <person name="Simeonova D.D."/>
            <person name="Hubert J.C."/>
            <person name="Lett M.C."/>
        </authorList>
    </citation>
    <scope>NUCLEOTIDE SEQUENCE [GENOMIC DNA]</scope>
    <scope>INDUCTION</scope>
    <source>
        <strain>ULPAs1</strain>
    </source>
</reference>
<reference key="2">
    <citation type="journal article" date="2007" name="PLoS Genet.">
        <title>A tale of two oxidation states: bacterial colonization of arsenic-rich environments.</title>
        <authorList>
            <person name="Muller D."/>
            <person name="Medigue C."/>
            <person name="Koechler S."/>
            <person name="Barbe V."/>
            <person name="Barakat M."/>
            <person name="Talla E."/>
            <person name="Bonnefoy V."/>
            <person name="Krin E."/>
            <person name="Arsene-Ploetze F."/>
            <person name="Carapito C."/>
            <person name="Chandler M."/>
            <person name="Cournoyer B."/>
            <person name="Cruveiller S."/>
            <person name="Dossat C."/>
            <person name="Duval S."/>
            <person name="Heymann M."/>
            <person name="Leize E."/>
            <person name="Lieutaud A."/>
            <person name="Lievremont D."/>
            <person name="Makita Y."/>
            <person name="Mangenot S."/>
            <person name="Nitschke W."/>
            <person name="Ortet P."/>
            <person name="Perdrial N."/>
            <person name="Schoepp B."/>
            <person name="Siguier P."/>
            <person name="Simeonova D.D."/>
            <person name="Rouy Z."/>
            <person name="Segurens B."/>
            <person name="Turlin E."/>
            <person name="Vallenet D."/>
            <person name="van Dorsselaer A."/>
            <person name="Weiss S."/>
            <person name="Weissenbach J."/>
            <person name="Lett M.-C."/>
            <person name="Danchin A."/>
            <person name="Bertin P.N."/>
        </authorList>
    </citation>
    <scope>NUCLEOTIDE SEQUENCE [LARGE SCALE GENOMIC DNA]</scope>
    <source>
        <strain>ULPAs1</strain>
    </source>
</reference>
<reference key="3">
    <citation type="journal article" date="2012" name="J. Bacteriol.">
        <title>Unified nomenclature for genes involved in prokaryotic aerobic arsenite oxidation.</title>
        <authorList>
            <person name="Lett M.C."/>
            <person name="Muller D."/>
            <person name="Lievremont D."/>
            <person name="Silver S."/>
            <person name="Santini J."/>
        </authorList>
    </citation>
    <scope>NOMENCLATURE</scope>
</reference>
<feature type="chain" id="PRO_0000063241" description="Arsenite oxidase subunit AioA">
    <location>
        <begin position="1"/>
        <end position="826"/>
    </location>
</feature>
<feature type="binding site" evidence="2">
    <location>
        <position position="22"/>
    </location>
    <ligand>
        <name>[3Fe-4S] cluster</name>
        <dbReference type="ChEBI" id="CHEBI:21137"/>
    </ligand>
</feature>
<feature type="binding site" evidence="2">
    <location>
        <position position="25"/>
    </location>
    <ligand>
        <name>[3Fe-4S] cluster</name>
        <dbReference type="ChEBI" id="CHEBI:21137"/>
    </ligand>
</feature>
<feature type="binding site" evidence="2">
    <location>
        <position position="29"/>
    </location>
    <ligand>
        <name>[3Fe-4S] cluster</name>
        <dbReference type="ChEBI" id="CHEBI:21137"/>
    </ligand>
</feature>
<feature type="binding site" evidence="1">
    <location>
        <position position="196"/>
    </location>
    <ligand>
        <name>substrate</name>
    </ligand>
</feature>
<feature type="binding site" evidence="1">
    <location>
        <position position="204"/>
    </location>
    <ligand>
        <name>substrate</name>
    </ligand>
</feature>
<feature type="binding site" evidence="1">
    <location>
        <position position="419"/>
    </location>
    <ligand>
        <name>substrate</name>
    </ligand>
</feature>
<feature type="binding site" evidence="1">
    <location>
        <position position="423"/>
    </location>
    <ligand>
        <name>substrate</name>
    </ligand>
</feature>
<feature type="site" description="Involved in charge transfer" evidence="2">
    <location>
        <position position="100"/>
    </location>
</feature>
<feature type="sequence conflict" description="In Ref. 1; AAN05581." evidence="4" ref="1">
    <original>V</original>
    <variation>L</variation>
    <location>
        <position position="318"/>
    </location>
</feature>
<organism>
    <name type="scientific">Herminiimonas arsenicoxydans</name>
    <dbReference type="NCBI Taxonomy" id="204773"/>
    <lineage>
        <taxon>Bacteria</taxon>
        <taxon>Pseudomonadati</taxon>
        <taxon>Pseudomonadota</taxon>
        <taxon>Betaproteobacteria</taxon>
        <taxon>Burkholderiales</taxon>
        <taxon>Oxalobacteraceae</taxon>
        <taxon>Herminiimonas</taxon>
    </lineage>
</organism>
<proteinExistence type="evidence at transcript level"/>
<name>AIOA_HERAR</name>
<accession>Q8GGJ6</accession>
<accession>A4G2F3</accession>